<evidence type="ECO:0000255" key="1">
    <source>
        <dbReference type="HAMAP-Rule" id="MF_01346"/>
    </source>
</evidence>
<dbReference type="EC" id="7.1.2.2" evidence="1"/>
<dbReference type="EMBL" id="BX293980">
    <property type="protein sequence ID" value="CAE77498.1"/>
    <property type="molecule type" value="Genomic_DNA"/>
</dbReference>
<dbReference type="RefSeq" id="NP_975856.1">
    <property type="nucleotide sequence ID" value="NC_005364.2"/>
</dbReference>
<dbReference type="RefSeq" id="WP_011167040.1">
    <property type="nucleotide sequence ID" value="NC_005364.2"/>
</dbReference>
<dbReference type="SMR" id="Q6MS92"/>
<dbReference type="STRING" id="272632.MSC_0887"/>
<dbReference type="KEGG" id="mmy:MSC_0887"/>
<dbReference type="PATRIC" id="fig|272632.4.peg.959"/>
<dbReference type="eggNOG" id="COG0056">
    <property type="taxonomic scope" value="Bacteria"/>
</dbReference>
<dbReference type="HOGENOM" id="CLU_010091_2_1_14"/>
<dbReference type="Proteomes" id="UP000001016">
    <property type="component" value="Chromosome"/>
</dbReference>
<dbReference type="GO" id="GO:0005886">
    <property type="term" value="C:plasma membrane"/>
    <property type="evidence" value="ECO:0007669"/>
    <property type="project" value="UniProtKB-SubCell"/>
</dbReference>
<dbReference type="GO" id="GO:0045259">
    <property type="term" value="C:proton-transporting ATP synthase complex"/>
    <property type="evidence" value="ECO:0007669"/>
    <property type="project" value="UniProtKB-KW"/>
</dbReference>
<dbReference type="GO" id="GO:0043531">
    <property type="term" value="F:ADP binding"/>
    <property type="evidence" value="ECO:0007669"/>
    <property type="project" value="TreeGrafter"/>
</dbReference>
<dbReference type="GO" id="GO:0005524">
    <property type="term" value="F:ATP binding"/>
    <property type="evidence" value="ECO:0007669"/>
    <property type="project" value="UniProtKB-UniRule"/>
</dbReference>
<dbReference type="GO" id="GO:0046933">
    <property type="term" value="F:proton-transporting ATP synthase activity, rotational mechanism"/>
    <property type="evidence" value="ECO:0007669"/>
    <property type="project" value="UniProtKB-UniRule"/>
</dbReference>
<dbReference type="CDD" id="cd18113">
    <property type="entry name" value="ATP-synt_F1_alpha_C"/>
    <property type="match status" value="1"/>
</dbReference>
<dbReference type="CDD" id="cd18116">
    <property type="entry name" value="ATP-synt_F1_alpha_N"/>
    <property type="match status" value="1"/>
</dbReference>
<dbReference type="CDD" id="cd01132">
    <property type="entry name" value="F1-ATPase_alpha_CD"/>
    <property type="match status" value="1"/>
</dbReference>
<dbReference type="FunFam" id="2.40.30.20:FF:000001">
    <property type="entry name" value="ATP synthase subunit alpha"/>
    <property type="match status" value="1"/>
</dbReference>
<dbReference type="FunFam" id="3.40.50.300:FF:000002">
    <property type="entry name" value="ATP synthase subunit alpha"/>
    <property type="match status" value="1"/>
</dbReference>
<dbReference type="Gene3D" id="2.40.30.20">
    <property type="match status" value="1"/>
</dbReference>
<dbReference type="Gene3D" id="1.20.150.20">
    <property type="entry name" value="ATP synthase alpha/beta chain, C-terminal domain"/>
    <property type="match status" value="1"/>
</dbReference>
<dbReference type="Gene3D" id="3.40.50.300">
    <property type="entry name" value="P-loop containing nucleotide triphosphate hydrolases"/>
    <property type="match status" value="1"/>
</dbReference>
<dbReference type="HAMAP" id="MF_01346">
    <property type="entry name" value="ATP_synth_alpha_bact"/>
    <property type="match status" value="1"/>
</dbReference>
<dbReference type="InterPro" id="IPR023366">
    <property type="entry name" value="ATP_synth_asu-like_sf"/>
</dbReference>
<dbReference type="InterPro" id="IPR000793">
    <property type="entry name" value="ATP_synth_asu_C"/>
</dbReference>
<dbReference type="InterPro" id="IPR038376">
    <property type="entry name" value="ATP_synth_asu_C_sf"/>
</dbReference>
<dbReference type="InterPro" id="IPR033732">
    <property type="entry name" value="ATP_synth_F1_a_nt-bd_dom"/>
</dbReference>
<dbReference type="InterPro" id="IPR005294">
    <property type="entry name" value="ATP_synth_F1_asu"/>
</dbReference>
<dbReference type="InterPro" id="IPR004100">
    <property type="entry name" value="ATPase_F1/V1/A1_a/bsu_N"/>
</dbReference>
<dbReference type="InterPro" id="IPR036121">
    <property type="entry name" value="ATPase_F1/V1/A1_a/bsu_N_sf"/>
</dbReference>
<dbReference type="InterPro" id="IPR000194">
    <property type="entry name" value="ATPase_F1/V1/A1_a/bsu_nucl-bd"/>
</dbReference>
<dbReference type="InterPro" id="IPR027417">
    <property type="entry name" value="P-loop_NTPase"/>
</dbReference>
<dbReference type="NCBIfam" id="TIGR00962">
    <property type="entry name" value="atpA"/>
    <property type="match status" value="1"/>
</dbReference>
<dbReference type="NCBIfam" id="NF009884">
    <property type="entry name" value="PRK13343.1"/>
    <property type="match status" value="1"/>
</dbReference>
<dbReference type="PANTHER" id="PTHR48082">
    <property type="entry name" value="ATP SYNTHASE SUBUNIT ALPHA, MITOCHONDRIAL"/>
    <property type="match status" value="1"/>
</dbReference>
<dbReference type="PANTHER" id="PTHR48082:SF2">
    <property type="entry name" value="ATP SYNTHASE SUBUNIT ALPHA, MITOCHONDRIAL"/>
    <property type="match status" value="1"/>
</dbReference>
<dbReference type="Pfam" id="PF00006">
    <property type="entry name" value="ATP-synt_ab"/>
    <property type="match status" value="1"/>
</dbReference>
<dbReference type="Pfam" id="PF00306">
    <property type="entry name" value="ATP-synt_ab_C"/>
    <property type="match status" value="1"/>
</dbReference>
<dbReference type="Pfam" id="PF02874">
    <property type="entry name" value="ATP-synt_ab_N"/>
    <property type="match status" value="1"/>
</dbReference>
<dbReference type="SUPFAM" id="SSF47917">
    <property type="entry name" value="C-terminal domain of alpha and beta subunits of F1 ATP synthase"/>
    <property type="match status" value="1"/>
</dbReference>
<dbReference type="SUPFAM" id="SSF50615">
    <property type="entry name" value="N-terminal domain of alpha and beta subunits of F1 ATP synthase"/>
    <property type="match status" value="1"/>
</dbReference>
<dbReference type="SUPFAM" id="SSF52540">
    <property type="entry name" value="P-loop containing nucleoside triphosphate hydrolases"/>
    <property type="match status" value="1"/>
</dbReference>
<organism>
    <name type="scientific">Mycoplasma mycoides subsp. mycoides SC (strain CCUG 32753 / NCTC 10114 / PG1)</name>
    <dbReference type="NCBI Taxonomy" id="272632"/>
    <lineage>
        <taxon>Bacteria</taxon>
        <taxon>Bacillati</taxon>
        <taxon>Mycoplasmatota</taxon>
        <taxon>Mollicutes</taxon>
        <taxon>Mycoplasmataceae</taxon>
        <taxon>Mycoplasma</taxon>
    </lineage>
</organism>
<gene>
    <name evidence="1" type="primary">atpA</name>
    <name type="ordered locus">MSC_0887</name>
</gene>
<sequence>MSFNIKEISEMIEEQIRNYNKEIVQTEQGTVVSVGDGIALIYGLDNAIMGEFLKFPNNVYGMVLNLEESAVGAIILGDETLIREGDIVKRTNKVVETPVGDALLGRVINALSKPIDNLGPINFTKTRPIERVATSVMARRSVSQPLETGILAIDSAIPIGKGQRELIIGDRQTGKTAIAIDAIINQKNKNVKCIYVAIGQKDSTIVQVVEKLKKYGAMEYTVVVNAGASQPAPLQYLSPYVGVTIAEEWMENGNDVLIIYDDLSKHAVSYRQMSLLLRRPPGREAYPGDVFYLHSRLLERAARVNENYGGGSITALPIIETQAGDISAYIPTNVISITDGQIFLSSELFNQGVRPAVDIGSSVSRVGSAAQIKSIKQVSGTLKLELAQYYELELFAKFGSDLDEATKATLDQGAKIIQMLIQKQHNPLEQVDQAILLLTIKSHLIKWLPVESIYNFKHEILSHFKNDKHAFELRKKLDEQKTFDDQLQQQILKEAQKVVLKITKNINEYKPGTFGNISEYQNLGK</sequence>
<protein>
    <recommendedName>
        <fullName evidence="1">ATP synthase subunit alpha</fullName>
        <ecNumber evidence="1">7.1.2.2</ecNumber>
    </recommendedName>
    <alternativeName>
        <fullName evidence="1">ATP synthase F1 sector subunit alpha</fullName>
    </alternativeName>
    <alternativeName>
        <fullName evidence="1">F-ATPase subunit alpha</fullName>
    </alternativeName>
</protein>
<accession>Q6MS92</accession>
<reference key="1">
    <citation type="journal article" date="2004" name="Genome Res.">
        <title>The genome sequence of Mycoplasma mycoides subsp. mycoides SC type strain PG1T, the causative agent of contagious bovine pleuropneumonia (CBPP).</title>
        <authorList>
            <person name="Westberg J."/>
            <person name="Persson A."/>
            <person name="Holmberg A."/>
            <person name="Goesmann A."/>
            <person name="Lundeberg J."/>
            <person name="Johansson K.-E."/>
            <person name="Pettersson B."/>
            <person name="Uhlen M."/>
        </authorList>
    </citation>
    <scope>NUCLEOTIDE SEQUENCE [LARGE SCALE GENOMIC DNA]</scope>
    <source>
        <strain>CCUG 32753 / NCTC 10114 / PG1</strain>
    </source>
</reference>
<keyword id="KW-0066">ATP synthesis</keyword>
<keyword id="KW-0067">ATP-binding</keyword>
<keyword id="KW-1003">Cell membrane</keyword>
<keyword id="KW-0139">CF(1)</keyword>
<keyword id="KW-0375">Hydrogen ion transport</keyword>
<keyword id="KW-0406">Ion transport</keyword>
<keyword id="KW-0472">Membrane</keyword>
<keyword id="KW-0547">Nucleotide-binding</keyword>
<keyword id="KW-1185">Reference proteome</keyword>
<keyword id="KW-1278">Translocase</keyword>
<keyword id="KW-0813">Transport</keyword>
<proteinExistence type="inferred from homology"/>
<feature type="chain" id="PRO_0000238295" description="ATP synthase subunit alpha">
    <location>
        <begin position="1"/>
        <end position="525"/>
    </location>
</feature>
<feature type="binding site" evidence="1">
    <location>
        <begin position="169"/>
        <end position="176"/>
    </location>
    <ligand>
        <name>ATP</name>
        <dbReference type="ChEBI" id="CHEBI:30616"/>
    </ligand>
</feature>
<feature type="site" description="Required for activity" evidence="1">
    <location>
        <position position="362"/>
    </location>
</feature>
<comment type="function">
    <text evidence="1">Produces ATP from ADP in the presence of a proton gradient across the membrane. The alpha chain is a regulatory subunit.</text>
</comment>
<comment type="catalytic activity">
    <reaction evidence="1">
        <text>ATP + H2O + 4 H(+)(in) = ADP + phosphate + 5 H(+)(out)</text>
        <dbReference type="Rhea" id="RHEA:57720"/>
        <dbReference type="ChEBI" id="CHEBI:15377"/>
        <dbReference type="ChEBI" id="CHEBI:15378"/>
        <dbReference type="ChEBI" id="CHEBI:30616"/>
        <dbReference type="ChEBI" id="CHEBI:43474"/>
        <dbReference type="ChEBI" id="CHEBI:456216"/>
        <dbReference type="EC" id="7.1.2.2"/>
    </reaction>
</comment>
<comment type="subunit">
    <text evidence="1">F-type ATPases have 2 components, CF(1) - the catalytic core - and CF(0) - the membrane proton channel. CF(1) has five subunits: alpha(3), beta(3), gamma(1), delta(1), epsilon(1). CF(0) has three main subunits: a(1), b(2) and c(9-12). The alpha and beta chains form an alternating ring which encloses part of the gamma chain. CF(1) is attached to CF(0) by a central stalk formed by the gamma and epsilon chains, while a peripheral stalk is formed by the delta and b chains.</text>
</comment>
<comment type="subcellular location">
    <subcellularLocation>
        <location evidence="1">Cell membrane</location>
        <topology evidence="1">Peripheral membrane protein</topology>
    </subcellularLocation>
</comment>
<comment type="similarity">
    <text evidence="1">Belongs to the ATPase alpha/beta chains family.</text>
</comment>
<name>ATPA_MYCMS</name>